<keyword id="KW-0162">Chylomicron</keyword>
<keyword id="KW-0967">Endosome</keyword>
<keyword id="KW-0272">Extracellular matrix</keyword>
<keyword id="KW-0325">Glycoprotein</keyword>
<keyword id="KW-0345">HDL</keyword>
<keyword id="KW-0358">Heparin-binding</keyword>
<keyword id="KW-0445">Lipid transport</keyword>
<keyword id="KW-0446">Lipid-binding</keyword>
<keyword id="KW-0558">Oxidation</keyword>
<keyword id="KW-0597">Phosphoprotein</keyword>
<keyword id="KW-0677">Repeat</keyword>
<keyword id="KW-0964">Secreted</keyword>
<keyword id="KW-0732">Signal</keyword>
<keyword id="KW-0813">Transport</keyword>
<keyword id="KW-0850">VLDL</keyword>
<organism>
    <name type="scientific">Ateles geoffroyi</name>
    <name type="common">Black-handed spider monkey</name>
    <name type="synonym">Geoffroy's spider monkey</name>
    <dbReference type="NCBI Taxonomy" id="9509"/>
    <lineage>
        <taxon>Eukaryota</taxon>
        <taxon>Metazoa</taxon>
        <taxon>Chordata</taxon>
        <taxon>Craniata</taxon>
        <taxon>Vertebrata</taxon>
        <taxon>Euteleostomi</taxon>
        <taxon>Mammalia</taxon>
        <taxon>Eutheria</taxon>
        <taxon>Euarchontoglires</taxon>
        <taxon>Primates</taxon>
        <taxon>Haplorrhini</taxon>
        <taxon>Platyrrhini</taxon>
        <taxon>Atelidae</taxon>
        <taxon>Atelinae</taxon>
        <taxon>Ateles</taxon>
    </lineage>
</organism>
<evidence type="ECO:0000250" key="1">
    <source>
        <dbReference type="UniProtKB" id="P02649"/>
    </source>
</evidence>
<evidence type="ECO:0000250" key="2">
    <source>
        <dbReference type="UniProtKB" id="P08226"/>
    </source>
</evidence>
<evidence type="ECO:0000255" key="3"/>
<evidence type="ECO:0000305" key="4"/>
<reference key="1">
    <citation type="submission" date="2006-07" db="EMBL/GenBank/DDBJ databases">
        <authorList>
            <person name="Cheng J.-F."/>
            <person name="Hamilton M."/>
            <person name="Peng Y."/>
            <person name="Hosseini R."/>
            <person name="Peng Z."/>
            <person name="Malinov I."/>
            <person name="Rubin E.M."/>
        </authorList>
    </citation>
    <scope>NUCLEOTIDE SEQUENCE [LARGE SCALE GENOMIC DNA]</scope>
</reference>
<reference key="2">
    <citation type="unpublished observations" date="2012-11">
        <authorList>
            <person name="Puppione D.L."/>
        </authorList>
    </citation>
    <scope>IDENTIFICATION</scope>
</reference>
<dbReference type="EMBL" id="AC188244">
    <property type="status" value="NOT_ANNOTATED_CDS"/>
    <property type="molecule type" value="Genomic_DNA"/>
</dbReference>
<dbReference type="GlyCosmos" id="P0DKW6">
    <property type="glycosylation" value="1 site, No reported glycans"/>
</dbReference>
<dbReference type="OrthoDB" id="9048614at2759"/>
<dbReference type="GO" id="GO:0042627">
    <property type="term" value="C:chylomicron"/>
    <property type="evidence" value="ECO:0007669"/>
    <property type="project" value="UniProtKB-KW"/>
</dbReference>
<dbReference type="GO" id="GO:0070062">
    <property type="term" value="C:extracellular exosome"/>
    <property type="evidence" value="ECO:0000250"/>
    <property type="project" value="UniProtKB"/>
</dbReference>
<dbReference type="GO" id="GO:0031012">
    <property type="term" value="C:extracellular matrix"/>
    <property type="evidence" value="ECO:0000250"/>
    <property type="project" value="UniProtKB"/>
</dbReference>
<dbReference type="GO" id="GO:0005615">
    <property type="term" value="C:extracellular space"/>
    <property type="evidence" value="ECO:0000250"/>
    <property type="project" value="UniProtKB"/>
</dbReference>
<dbReference type="GO" id="GO:0034364">
    <property type="term" value="C:high-density lipoprotein particle"/>
    <property type="evidence" value="ECO:0000250"/>
    <property type="project" value="UniProtKB"/>
</dbReference>
<dbReference type="GO" id="GO:0034363">
    <property type="term" value="C:intermediate-density lipoprotein particle"/>
    <property type="evidence" value="ECO:0000250"/>
    <property type="project" value="UniProtKB"/>
</dbReference>
<dbReference type="GO" id="GO:0034362">
    <property type="term" value="C:low-density lipoprotein particle"/>
    <property type="evidence" value="ECO:0000250"/>
    <property type="project" value="UniProtKB"/>
</dbReference>
<dbReference type="GO" id="GO:0097487">
    <property type="term" value="C:multivesicular body, internal vesicle"/>
    <property type="evidence" value="ECO:0000250"/>
    <property type="project" value="UniProtKB"/>
</dbReference>
<dbReference type="GO" id="GO:0034361">
    <property type="term" value="C:very-low-density lipoprotein particle"/>
    <property type="evidence" value="ECO:0000250"/>
    <property type="project" value="UniProtKB"/>
</dbReference>
<dbReference type="GO" id="GO:0120020">
    <property type="term" value="F:cholesterol transfer activity"/>
    <property type="evidence" value="ECO:0007669"/>
    <property type="project" value="TreeGrafter"/>
</dbReference>
<dbReference type="GO" id="GO:0043395">
    <property type="term" value="F:heparan sulfate proteoglycan binding"/>
    <property type="evidence" value="ECO:0000250"/>
    <property type="project" value="UniProtKB"/>
</dbReference>
<dbReference type="GO" id="GO:0008201">
    <property type="term" value="F:heparin binding"/>
    <property type="evidence" value="ECO:0000250"/>
    <property type="project" value="UniProtKB"/>
</dbReference>
<dbReference type="GO" id="GO:0042802">
    <property type="term" value="F:identical protein binding"/>
    <property type="evidence" value="ECO:0000250"/>
    <property type="project" value="UniProtKB"/>
</dbReference>
<dbReference type="GO" id="GO:0050750">
    <property type="term" value="F:low-density lipoprotein particle receptor binding"/>
    <property type="evidence" value="ECO:0000250"/>
    <property type="project" value="UniProtKB"/>
</dbReference>
<dbReference type="GO" id="GO:0060228">
    <property type="term" value="F:phosphatidylcholine-sterol O-acyltransferase activator activity"/>
    <property type="evidence" value="ECO:0007669"/>
    <property type="project" value="TreeGrafter"/>
</dbReference>
<dbReference type="GO" id="GO:0005543">
    <property type="term" value="F:phospholipid binding"/>
    <property type="evidence" value="ECO:0007669"/>
    <property type="project" value="TreeGrafter"/>
</dbReference>
<dbReference type="GO" id="GO:0055090">
    <property type="term" value="P:acylglycerol homeostasis"/>
    <property type="evidence" value="ECO:0007669"/>
    <property type="project" value="TreeGrafter"/>
</dbReference>
<dbReference type="GO" id="GO:0033344">
    <property type="term" value="P:cholesterol efflux"/>
    <property type="evidence" value="ECO:0000250"/>
    <property type="project" value="UniProtKB"/>
</dbReference>
<dbReference type="GO" id="GO:0008203">
    <property type="term" value="P:cholesterol metabolic process"/>
    <property type="evidence" value="ECO:0007669"/>
    <property type="project" value="TreeGrafter"/>
</dbReference>
<dbReference type="GO" id="GO:0034382">
    <property type="term" value="P:chylomicron remnant clearance"/>
    <property type="evidence" value="ECO:0000250"/>
    <property type="project" value="UniProtKB"/>
</dbReference>
<dbReference type="GO" id="GO:0034380">
    <property type="term" value="P:high-density lipoprotein particle assembly"/>
    <property type="evidence" value="ECO:0000250"/>
    <property type="project" value="UniProtKB"/>
</dbReference>
<dbReference type="GO" id="GO:0071831">
    <property type="term" value="P:intermediate-density lipoprotein particle clearance"/>
    <property type="evidence" value="ECO:0000250"/>
    <property type="project" value="UniProtKB"/>
</dbReference>
<dbReference type="GO" id="GO:0042158">
    <property type="term" value="P:lipoprotein biosynthetic process"/>
    <property type="evidence" value="ECO:0000250"/>
    <property type="project" value="UniProtKB"/>
</dbReference>
<dbReference type="GO" id="GO:0032438">
    <property type="term" value="P:melanosome organization"/>
    <property type="evidence" value="ECO:0000250"/>
    <property type="project" value="UniProtKB"/>
</dbReference>
<dbReference type="GO" id="GO:1905907">
    <property type="term" value="P:negative regulation of amyloid fibril formation"/>
    <property type="evidence" value="ECO:0000250"/>
    <property type="project" value="UniProtKB"/>
</dbReference>
<dbReference type="GO" id="GO:0031175">
    <property type="term" value="P:neuron projection development"/>
    <property type="evidence" value="ECO:0000250"/>
    <property type="project" value="UniProtKB"/>
</dbReference>
<dbReference type="GO" id="GO:0033700">
    <property type="term" value="P:phospholipid efflux"/>
    <property type="evidence" value="ECO:0007669"/>
    <property type="project" value="TreeGrafter"/>
</dbReference>
<dbReference type="GO" id="GO:1900223">
    <property type="term" value="P:positive regulation of amyloid-beta clearance"/>
    <property type="evidence" value="ECO:0000250"/>
    <property type="project" value="UniProtKB"/>
</dbReference>
<dbReference type="GO" id="GO:0071830">
    <property type="term" value="P:triglyceride-rich lipoprotein particle clearance"/>
    <property type="evidence" value="ECO:0000250"/>
    <property type="project" value="UniProtKB"/>
</dbReference>
<dbReference type="GO" id="GO:0034447">
    <property type="term" value="P:very-low-density lipoprotein particle clearance"/>
    <property type="evidence" value="ECO:0000250"/>
    <property type="project" value="UniProtKB"/>
</dbReference>
<dbReference type="FunFam" id="1.20.120.20:FF:000002">
    <property type="entry name" value="Apolipoprotein E"/>
    <property type="match status" value="1"/>
</dbReference>
<dbReference type="FunFam" id="1.20.120.20:FF:000003">
    <property type="entry name" value="Apolipoprotein E"/>
    <property type="match status" value="1"/>
</dbReference>
<dbReference type="Gene3D" id="1.20.120.20">
    <property type="entry name" value="Apolipoprotein"/>
    <property type="match status" value="2"/>
</dbReference>
<dbReference type="InterPro" id="IPR000074">
    <property type="entry name" value="ApoA_E"/>
</dbReference>
<dbReference type="InterPro" id="IPR050163">
    <property type="entry name" value="Apolipoprotein_A1/A4/E"/>
</dbReference>
<dbReference type="PANTHER" id="PTHR18976">
    <property type="entry name" value="APOLIPOPROTEIN"/>
    <property type="match status" value="1"/>
</dbReference>
<dbReference type="PANTHER" id="PTHR18976:SF2">
    <property type="entry name" value="APOLIPOPROTEIN E"/>
    <property type="match status" value="1"/>
</dbReference>
<dbReference type="Pfam" id="PF01442">
    <property type="entry name" value="Apolipoprotein"/>
    <property type="match status" value="1"/>
</dbReference>
<dbReference type="SUPFAM" id="SSF58113">
    <property type="entry name" value="Apolipoprotein A-I"/>
    <property type="match status" value="1"/>
</dbReference>
<sequence length="322" mass="36710">MKVLWAALLVAFLAGCQGKMEPELEREPELEREPELHQQADWQSGQPWELALGRFWDYLRWVQTLSEQVQEELLSSQVTQELTALMDETMKELKAYKSELEEQLSPVAEETRARLSKELQAAQARLGADMEDVRSRLAXYRSEVQAMLGQSXDELRARLASHLRKLRKRLLRDVDDLQKRLAVYQAGAREGAERGVSAIRERLVPLVEQGRARAATVGSSLAGQPLQERAQAWGERLRARMEEVGSRTRDRLDEVKEQVEEVRAKLEEQAQQMRLQAEAFQARLKSWFEPLVEDMQRQWAGLVEKVQAAVGASAAPVPGDNH</sequence>
<name>APOE_ATEGE</name>
<feature type="signal peptide" evidence="3">
    <location>
        <begin position="1"/>
        <end position="18"/>
    </location>
</feature>
<feature type="chain" id="PRO_0000420993" description="Apolipoprotein E">
    <location>
        <begin position="19"/>
        <end position="322"/>
    </location>
</feature>
<feature type="repeat" description="1">
    <location>
        <begin position="84"/>
        <end position="105"/>
    </location>
</feature>
<feature type="repeat" description="2">
    <location>
        <begin position="106"/>
        <end position="127"/>
    </location>
</feature>
<feature type="repeat" description="3">
    <location>
        <begin position="128"/>
        <end position="149"/>
    </location>
</feature>
<feature type="repeat" description="4">
    <location>
        <begin position="150"/>
        <end position="171"/>
    </location>
</feature>
<feature type="repeat" description="5">
    <location>
        <begin position="172"/>
        <end position="193"/>
    </location>
</feature>
<feature type="repeat" description="6">
    <location>
        <begin position="194"/>
        <end position="215"/>
    </location>
</feature>
<feature type="repeat" description="7">
    <location>
        <begin position="216"/>
        <end position="238"/>
    </location>
</feature>
<feature type="repeat" description="8">
    <location>
        <begin position="239"/>
        <end position="260"/>
    </location>
</feature>
<feature type="region of interest" description="8 X 22 AA approximate tandem repeats">
    <location>
        <begin position="84"/>
        <end position="260"/>
    </location>
</feature>
<feature type="region of interest" description="LDL and other lipoprotein receptors binding" evidence="1">
    <location>
        <begin position="162"/>
        <end position="172"/>
    </location>
</feature>
<feature type="region of interest" description="Lipid-binding and lipoprotein association" evidence="1">
    <location>
        <begin position="214"/>
        <end position="295"/>
    </location>
</feature>
<feature type="region of interest" description="Homooligomerization" evidence="1">
    <location>
        <begin position="271"/>
        <end position="322"/>
    </location>
</feature>
<feature type="region of interest" description="Specificity for association with VLDL" evidence="1">
    <location>
        <begin position="283"/>
        <end position="295"/>
    </location>
</feature>
<feature type="binding site" evidence="1">
    <location>
        <begin position="166"/>
        <end position="169"/>
    </location>
    <ligand>
        <name>heparin</name>
        <dbReference type="ChEBI" id="CHEBI:28304"/>
    </ligand>
</feature>
<feature type="binding site" evidence="1">
    <location>
        <begin position="234"/>
        <end position="241"/>
    </location>
    <ligand>
        <name>heparin</name>
        <dbReference type="ChEBI" id="CHEBI:28304"/>
    </ligand>
</feature>
<feature type="modified residue" description="Methionine sulfoxide" evidence="2">
    <location>
        <position position="147"/>
    </location>
</feature>
<feature type="modified residue" description="Phosphoserine" evidence="1">
    <location>
        <position position="151"/>
    </location>
</feature>
<feature type="glycosylation site" description="O-linked (GalNAc...) threonine" evidence="1">
    <location>
        <position position="216"/>
    </location>
</feature>
<gene>
    <name type="primary">APOE</name>
</gene>
<protein>
    <recommendedName>
        <fullName>Apolipoprotein E</fullName>
        <shortName>Apo-E</shortName>
    </recommendedName>
</protein>
<comment type="function">
    <text evidence="1">APOE is an apolipoprotein, a protein associating with lipid particles, that mainly functions in lipoprotein-mediated lipid transport between organs via the plasma and interstitial fluids. APOE is a core component of plasma lipoproteins and is involved in their production, conversion and clearance. Apolipoproteins are amphipathic molecules that interact both with lipids of the lipoprotein particle core and the aqueous environment of the plasma. As such, APOE associates with chylomicrons, chylomicron remnants, very low density lipoproteins (VLDL) and intermediate density lipoproteins (IDL) but shows a preferential binding to high-density lipoproteins (HDL). It also binds a wide range of cellular receptors including the LDL receptor/LDLR, the LDL receptor-related proteins LRP1, LRP2 and LRP8 and the very low-density lipoprotein receptor/VLDLR that mediate the cellular uptake of the APOE-containing lipoprotein particles. Finally, APOE also has a heparin-binding activity and binds heparan-sulfate proteoglycans on the surface of cells, a property that supports the capture and the receptor-mediated uptake of APOE-containing lipoproteins by cells. A main function of APOE is to mediate lipoprotein clearance through the uptake of chylomicrons, VLDLs, and HDLs by hepatocytes. APOE is also involved in the biosynthesis by the liver of VLDLs as well as their uptake by peripheral tissues ensuring the delivery of triglycerides and energy storage in muscle, heart and adipose tissues. By participating in the lipoprotein-mediated distribution of lipids among tissues, APOE plays a critical role in plasma and tissues lipid homeostasis. APOE is also involved in two steps of reverse cholesterol transport, the HDLs-mediated transport of cholesterol from peripheral tissues to the liver, and thereby plays an important role in cholesterol homeostasis. First, it is functionally associated with ABCA1 in the biogenesis of HDLs in tissues. Second, it is enriched in circulating HDLs and mediates their uptake by hepatocytes. APOE also plays an important role in lipid transport in the central nervous system, regulating neuron survival and sprouting.</text>
</comment>
<comment type="subunit">
    <text evidence="1">Homotetramer. May interact with ABCA1; functionally associated with ABCA1 in the biogenesis of HDLs. May interact with APP/A4 amyloid-beta peptide; the interaction is extremely stable in vitro but its physiological significance is unclear. May interact with MAPT. May interact with MAP2. In the cerebrospinal fluid, interacts with secreted SORL1. Interacts with PMEL; this allows the loading of PMEL luminal fragment on ILVs to induce fibril nucleation.</text>
</comment>
<comment type="subcellular location">
    <subcellularLocation>
        <location evidence="1">Secreted</location>
    </subcellularLocation>
    <subcellularLocation>
        <location evidence="1">Secreted</location>
        <location evidence="1">Extracellular space</location>
    </subcellularLocation>
    <subcellularLocation>
        <location evidence="1">Secreted</location>
        <location evidence="1">Extracellular space</location>
        <location evidence="1">Extracellular matrix</location>
    </subcellularLocation>
    <subcellularLocation>
        <location evidence="1">Extracellular vesicle</location>
    </subcellularLocation>
    <subcellularLocation>
        <location evidence="1">Endosome</location>
        <location evidence="1">Multivesicular body</location>
    </subcellularLocation>
    <text evidence="1">In the plasma, APOE is associated with chylomicrons, chylomicrons remnants, VLDL, LDL and HDL lipoproteins. Lipid poor oligomeric APOE is associated with the extracellular matrix in a calcium- and heparan-sulfate proteoglycans-dependent manner. Lipidation induces the release from the extracellular matrix. Colocalizes with CD63 and PMEL at exosomes and in intraluminal vesicles within multivesicular endosomes.</text>
</comment>
<comment type="PTM">
    <text evidence="1">APOE exists as multiple glycosylated and sialylated glycoforms within cells and in plasma. The extent of glycosylation and sialylation are tissue and context specific.</text>
</comment>
<comment type="PTM">
    <text evidence="1">Glycated in plasma VLDL.</text>
</comment>
<comment type="PTM">
    <text evidence="1">Phosphorylated by FAM20C in the extracellular medium.</text>
</comment>
<comment type="similarity">
    <text evidence="4">Belongs to the apolipoprotein A1/A4/E family.</text>
</comment>
<proteinExistence type="inferred from homology"/>
<accession>P0DKW6</accession>